<protein>
    <recommendedName>
        <fullName evidence="1">5-methyltetrahydropteroyltriglutamate--homocysteine methyltransferase</fullName>
        <ecNumber evidence="1">2.1.1.14</ecNumber>
    </recommendedName>
    <alternativeName>
        <fullName evidence="1">Cobalamin-independent methionine synthase</fullName>
    </alternativeName>
    <alternativeName>
        <fullName evidence="1">Methionine synthase, vitamin-B12 independent isozyme</fullName>
    </alternativeName>
</protein>
<proteinExistence type="inferred from homology"/>
<evidence type="ECO:0000255" key="1">
    <source>
        <dbReference type="HAMAP-Rule" id="MF_00172"/>
    </source>
</evidence>
<keyword id="KW-0028">Amino-acid biosynthesis</keyword>
<keyword id="KW-0479">Metal-binding</keyword>
<keyword id="KW-0486">Methionine biosynthesis</keyword>
<keyword id="KW-0489">Methyltransferase</keyword>
<keyword id="KW-0677">Repeat</keyword>
<keyword id="KW-0808">Transferase</keyword>
<keyword id="KW-0862">Zinc</keyword>
<feature type="chain" id="PRO_1000191196" description="5-methyltetrahydropteroyltriglutamate--homocysteine methyltransferase">
    <location>
        <begin position="1"/>
        <end position="780"/>
    </location>
</feature>
<feature type="active site" description="Proton donor" evidence="1">
    <location>
        <position position="720"/>
    </location>
</feature>
<feature type="binding site" evidence="1">
    <location>
        <begin position="15"/>
        <end position="18"/>
    </location>
    <ligand>
        <name>5-methyltetrahydropteroyltri-L-glutamate</name>
        <dbReference type="ChEBI" id="CHEBI:58207"/>
    </ligand>
</feature>
<feature type="binding site" evidence="1">
    <location>
        <position position="114"/>
    </location>
    <ligand>
        <name>5-methyltetrahydropteroyltri-L-glutamate</name>
        <dbReference type="ChEBI" id="CHEBI:58207"/>
    </ligand>
</feature>
<feature type="binding site" evidence="1">
    <location>
        <begin position="457"/>
        <end position="459"/>
    </location>
    <ligand>
        <name>L-homocysteine</name>
        <dbReference type="ChEBI" id="CHEBI:58199"/>
    </ligand>
</feature>
<feature type="binding site" evidence="1">
    <location>
        <begin position="457"/>
        <end position="459"/>
    </location>
    <ligand>
        <name>L-methionine</name>
        <dbReference type="ChEBI" id="CHEBI:57844"/>
    </ligand>
</feature>
<feature type="binding site" evidence="1">
    <location>
        <position position="510"/>
    </location>
    <ligand>
        <name>L-homocysteine</name>
        <dbReference type="ChEBI" id="CHEBI:58199"/>
    </ligand>
</feature>
<feature type="binding site" evidence="1">
    <location>
        <position position="510"/>
    </location>
    <ligand>
        <name>L-methionine</name>
        <dbReference type="ChEBI" id="CHEBI:57844"/>
    </ligand>
</feature>
<feature type="binding site" evidence="1">
    <location>
        <begin position="541"/>
        <end position="542"/>
    </location>
    <ligand>
        <name>5-methyltetrahydropteroyltri-L-glutamate</name>
        <dbReference type="ChEBI" id="CHEBI:58207"/>
    </ligand>
</feature>
<feature type="binding site" evidence="1">
    <location>
        <position position="587"/>
    </location>
    <ligand>
        <name>5-methyltetrahydropteroyltri-L-glutamate</name>
        <dbReference type="ChEBI" id="CHEBI:58207"/>
    </ligand>
</feature>
<feature type="binding site" evidence="1">
    <location>
        <position position="625"/>
    </location>
    <ligand>
        <name>L-homocysteine</name>
        <dbReference type="ChEBI" id="CHEBI:58199"/>
    </ligand>
</feature>
<feature type="binding site" evidence="1">
    <location>
        <position position="625"/>
    </location>
    <ligand>
        <name>L-methionine</name>
        <dbReference type="ChEBI" id="CHEBI:57844"/>
    </ligand>
</feature>
<feature type="binding site" evidence="1">
    <location>
        <position position="631"/>
    </location>
    <ligand>
        <name>5-methyltetrahydropteroyltri-L-glutamate</name>
        <dbReference type="ChEBI" id="CHEBI:58207"/>
    </ligand>
</feature>
<feature type="binding site" evidence="1">
    <location>
        <position position="667"/>
    </location>
    <ligand>
        <name>Zn(2+)</name>
        <dbReference type="ChEBI" id="CHEBI:29105"/>
        <note>catalytic</note>
    </ligand>
</feature>
<feature type="binding site" evidence="1">
    <location>
        <position position="669"/>
    </location>
    <ligand>
        <name>Zn(2+)</name>
        <dbReference type="ChEBI" id="CHEBI:29105"/>
        <note>catalytic</note>
    </ligand>
</feature>
<feature type="binding site" evidence="1">
    <location>
        <position position="691"/>
    </location>
    <ligand>
        <name>Zn(2+)</name>
        <dbReference type="ChEBI" id="CHEBI:29105"/>
        <note>catalytic</note>
    </ligand>
</feature>
<feature type="binding site" evidence="1">
    <location>
        <position position="752"/>
    </location>
    <ligand>
        <name>Zn(2+)</name>
        <dbReference type="ChEBI" id="CHEBI:29105"/>
        <note>catalytic</note>
    </ligand>
</feature>
<gene>
    <name evidence="1" type="primary">metE</name>
    <name type="ordered locus">DvMF_2035</name>
</gene>
<accession>B8DMM2</accession>
<sequence>MRTHTLGFPRIGGNRELKKAVEDYWKGAATRQQLEDAARAIRLRNWTLQREAGIDVVPVGDFALYDHILDAALLLGVIPPRFRNDDAPRDIDLMFRMARGQGGDRPVAPLEMTKWFDTNYHYLVPELDAATTFAPDAAPLLALIDEALAAGFTPKAVLPGPMTFLWLSKRVDGGTRWSLLPALLDAYGALLRDVAARCPLIQLDEPILSLDLADDIRSRFVPAYARLRVAVPDATLLLASYFAPVGDNLPVALSLPVDVVHLDLVRGPEDLTPALDILTRAAARQPADSGLPQSGSQSGIALSLGVINGRNVWRVDADKAAAPVRAAVAALGPDRVWVAPSCSLLHCPVDLDAETGLDPEVAQWLAFARQKCAEVRLVADMCDLNGRADAPETAAALARNRAALAARAASPVIHDPAVAVRAGTVTPEMGWRATPYTARIAAQRAALRLPVLPATTIGSFPQTVDIRAQRRKLRTGQITEAQYDAAMREAIATAIREQEALGLDVLVHGEPERNDMVEYFGEQLRGFCITANGWVQSYGTRCVKPPLLYGDVARPGPMTVRWITHAQSLTQKPVKGMLTGPVTIACWSFVRDDVPRPVVFRQLALAIRDEVADLEAAGIGVIQIDEPALREGLPLRRAAHAAYLDAAVGAFRLASSGVRDATQIHTHMCYCDFHDIIDHVAALDADVISLEASRSRMELLDVFATHAYPNEVGPGVYDIHSPRVPSIDEMETLLRAASRVLPLDRLWANPDCGLKTRDWPETRASLAHLVAAATRVREGG</sequence>
<name>METE_NITV9</name>
<organism>
    <name type="scientific">Nitratidesulfovibrio vulgaris (strain DSM 19637 / Miyazaki F)</name>
    <name type="common">Desulfovibrio vulgaris</name>
    <dbReference type="NCBI Taxonomy" id="883"/>
    <lineage>
        <taxon>Bacteria</taxon>
        <taxon>Pseudomonadati</taxon>
        <taxon>Thermodesulfobacteriota</taxon>
        <taxon>Desulfovibrionia</taxon>
        <taxon>Desulfovibrionales</taxon>
        <taxon>Desulfovibrionaceae</taxon>
        <taxon>Nitratidesulfovibrio</taxon>
    </lineage>
</organism>
<comment type="function">
    <text evidence="1">Catalyzes the transfer of a methyl group from 5-methyltetrahydrofolate to homocysteine resulting in methionine formation.</text>
</comment>
<comment type="catalytic activity">
    <reaction evidence="1">
        <text>5-methyltetrahydropteroyltri-L-glutamate + L-homocysteine = tetrahydropteroyltri-L-glutamate + L-methionine</text>
        <dbReference type="Rhea" id="RHEA:21196"/>
        <dbReference type="ChEBI" id="CHEBI:57844"/>
        <dbReference type="ChEBI" id="CHEBI:58140"/>
        <dbReference type="ChEBI" id="CHEBI:58199"/>
        <dbReference type="ChEBI" id="CHEBI:58207"/>
        <dbReference type="EC" id="2.1.1.14"/>
    </reaction>
</comment>
<comment type="cofactor">
    <cofactor evidence="1">
        <name>Zn(2+)</name>
        <dbReference type="ChEBI" id="CHEBI:29105"/>
    </cofactor>
    <text evidence="1">Binds 1 zinc ion per subunit.</text>
</comment>
<comment type="pathway">
    <text evidence="1">Amino-acid biosynthesis; L-methionine biosynthesis via de novo pathway; L-methionine from L-homocysteine (MetE route): step 1/1.</text>
</comment>
<comment type="similarity">
    <text evidence="1">Belongs to the vitamin-B12 independent methionine synthase family.</text>
</comment>
<dbReference type="EC" id="2.1.1.14" evidence="1"/>
<dbReference type="EMBL" id="CP001197">
    <property type="protein sequence ID" value="ACL08978.1"/>
    <property type="molecule type" value="Genomic_DNA"/>
</dbReference>
<dbReference type="SMR" id="B8DMM2"/>
<dbReference type="STRING" id="883.DvMF_2035"/>
<dbReference type="KEGG" id="dvm:DvMF_2035"/>
<dbReference type="eggNOG" id="COG0620">
    <property type="taxonomic scope" value="Bacteria"/>
</dbReference>
<dbReference type="HOGENOM" id="CLU_013175_0_0_7"/>
<dbReference type="OrthoDB" id="244285at2"/>
<dbReference type="UniPathway" id="UPA00051">
    <property type="reaction ID" value="UER00082"/>
</dbReference>
<dbReference type="GO" id="GO:0003871">
    <property type="term" value="F:5-methyltetrahydropteroyltriglutamate-homocysteine S-methyltransferase activity"/>
    <property type="evidence" value="ECO:0007669"/>
    <property type="project" value="UniProtKB-UniRule"/>
</dbReference>
<dbReference type="GO" id="GO:0008270">
    <property type="term" value="F:zinc ion binding"/>
    <property type="evidence" value="ECO:0007669"/>
    <property type="project" value="InterPro"/>
</dbReference>
<dbReference type="GO" id="GO:0009086">
    <property type="term" value="P:methionine biosynthetic process"/>
    <property type="evidence" value="ECO:0007669"/>
    <property type="project" value="UniProtKB-UniRule"/>
</dbReference>
<dbReference type="GO" id="GO:0032259">
    <property type="term" value="P:methylation"/>
    <property type="evidence" value="ECO:0007669"/>
    <property type="project" value="UniProtKB-KW"/>
</dbReference>
<dbReference type="CDD" id="cd03311">
    <property type="entry name" value="CIMS_C_terminal_like"/>
    <property type="match status" value="1"/>
</dbReference>
<dbReference type="CDD" id="cd03312">
    <property type="entry name" value="CIMS_N_terminal_like"/>
    <property type="match status" value="1"/>
</dbReference>
<dbReference type="Gene3D" id="3.20.20.210">
    <property type="match status" value="2"/>
</dbReference>
<dbReference type="HAMAP" id="MF_00172">
    <property type="entry name" value="Meth_synth"/>
    <property type="match status" value="1"/>
</dbReference>
<dbReference type="InterPro" id="IPR013215">
    <property type="entry name" value="Cbl-indep_Met_Synth_N"/>
</dbReference>
<dbReference type="InterPro" id="IPR006276">
    <property type="entry name" value="Cobalamin-indep_Met_synthase"/>
</dbReference>
<dbReference type="InterPro" id="IPR002629">
    <property type="entry name" value="Met_Synth_C/arc"/>
</dbReference>
<dbReference type="InterPro" id="IPR038071">
    <property type="entry name" value="UROD/MetE-like_sf"/>
</dbReference>
<dbReference type="NCBIfam" id="TIGR01371">
    <property type="entry name" value="met_syn_B12ind"/>
    <property type="match status" value="1"/>
</dbReference>
<dbReference type="NCBIfam" id="NF003556">
    <property type="entry name" value="PRK05222.1"/>
    <property type="match status" value="1"/>
</dbReference>
<dbReference type="PANTHER" id="PTHR30519">
    <property type="entry name" value="5-METHYLTETRAHYDROPTEROYLTRIGLUTAMATE--HOMOCYSTEINE METHYLTRANSFERASE"/>
    <property type="match status" value="1"/>
</dbReference>
<dbReference type="Pfam" id="PF08267">
    <property type="entry name" value="Meth_synt_1"/>
    <property type="match status" value="1"/>
</dbReference>
<dbReference type="Pfam" id="PF01717">
    <property type="entry name" value="Meth_synt_2"/>
    <property type="match status" value="1"/>
</dbReference>
<dbReference type="PIRSF" id="PIRSF000382">
    <property type="entry name" value="MeTrfase_B12_ind"/>
    <property type="match status" value="1"/>
</dbReference>
<dbReference type="SUPFAM" id="SSF51726">
    <property type="entry name" value="UROD/MetE-like"/>
    <property type="match status" value="2"/>
</dbReference>
<reference key="1">
    <citation type="submission" date="2008-10" db="EMBL/GenBank/DDBJ databases">
        <title>Complete sequence of Desulfovibrio vulgaris str. 'Miyazaki F'.</title>
        <authorList>
            <person name="Lucas S."/>
            <person name="Copeland A."/>
            <person name="Lapidus A."/>
            <person name="Glavina del Rio T."/>
            <person name="Dalin E."/>
            <person name="Tice H."/>
            <person name="Bruce D."/>
            <person name="Goodwin L."/>
            <person name="Pitluck S."/>
            <person name="Sims D."/>
            <person name="Brettin T."/>
            <person name="Detter J.C."/>
            <person name="Han C."/>
            <person name="Larimer F."/>
            <person name="Land M."/>
            <person name="Hauser L."/>
            <person name="Kyrpides N."/>
            <person name="Mikhailova N."/>
            <person name="Hazen T.C."/>
            <person name="Richardson P."/>
        </authorList>
    </citation>
    <scope>NUCLEOTIDE SEQUENCE [LARGE SCALE GENOMIC DNA]</scope>
    <source>
        <strain>DSM 19637 / Miyazaki F</strain>
    </source>
</reference>